<reference key="1">
    <citation type="journal article" date="2003" name="Proc. Natl. Acad. Sci. U.S.A.">
        <title>Complete genome sequence of the Q-fever pathogen, Coxiella burnetii.</title>
        <authorList>
            <person name="Seshadri R."/>
            <person name="Paulsen I.T."/>
            <person name="Eisen J.A."/>
            <person name="Read T.D."/>
            <person name="Nelson K.E."/>
            <person name="Nelson W.C."/>
            <person name="Ward N.L."/>
            <person name="Tettelin H."/>
            <person name="Davidsen T.M."/>
            <person name="Beanan M.J."/>
            <person name="DeBoy R.T."/>
            <person name="Daugherty S.C."/>
            <person name="Brinkac L.M."/>
            <person name="Madupu R."/>
            <person name="Dodson R.J."/>
            <person name="Khouri H.M."/>
            <person name="Lee K.H."/>
            <person name="Carty H.A."/>
            <person name="Scanlan D."/>
            <person name="Heinzen R.A."/>
            <person name="Thompson H.A."/>
            <person name="Samuel J.E."/>
            <person name="Fraser C.M."/>
            <person name="Heidelberg J.F."/>
        </authorList>
    </citation>
    <scope>NUCLEOTIDE SEQUENCE [LARGE SCALE GENOMIC DNA]</scope>
    <source>
        <strain>RSA 493 / Nine Mile phase I</strain>
    </source>
</reference>
<accession>Q4AAX7</accession>
<keyword id="KW-0413">Isomerase</keyword>
<keyword id="KW-1185">Reference proteome</keyword>
<keyword id="KW-0819">tRNA processing</keyword>
<organism>
    <name type="scientific">Coxiella burnetii (strain RSA 493 / Nine Mile phase I)</name>
    <dbReference type="NCBI Taxonomy" id="227377"/>
    <lineage>
        <taxon>Bacteria</taxon>
        <taxon>Pseudomonadati</taxon>
        <taxon>Pseudomonadota</taxon>
        <taxon>Gammaproteobacteria</taxon>
        <taxon>Legionellales</taxon>
        <taxon>Coxiellaceae</taxon>
        <taxon>Coxiella</taxon>
    </lineage>
</organism>
<protein>
    <recommendedName>
        <fullName evidence="1">tRNA pseudouridine synthase B</fullName>
        <ecNumber evidence="1">5.4.99.25</ecNumber>
    </recommendedName>
    <alternativeName>
        <fullName evidence="1">tRNA pseudouridine(55) synthase</fullName>
        <shortName evidence="1">Psi55 synthase</shortName>
    </alternativeName>
    <alternativeName>
        <fullName evidence="1">tRNA pseudouridylate synthase</fullName>
    </alternativeName>
    <alternativeName>
        <fullName evidence="1">tRNA-uridine isomerase</fullName>
    </alternativeName>
</protein>
<evidence type="ECO:0000255" key="1">
    <source>
        <dbReference type="HAMAP-Rule" id="MF_01080"/>
    </source>
</evidence>
<dbReference type="EC" id="5.4.99.25" evidence="1"/>
<dbReference type="EMBL" id="AE016828">
    <property type="protein sequence ID" value="AAZ22626.1"/>
    <property type="molecule type" value="Genomic_DNA"/>
</dbReference>
<dbReference type="RefSeq" id="WP_010958222.1">
    <property type="nucleotide sequence ID" value="NC_002971.4"/>
</dbReference>
<dbReference type="RefSeq" id="YP_338283.1">
    <property type="nucleotide sequence ID" value="NC_002971.4"/>
</dbReference>
<dbReference type="SMR" id="Q4AAX7"/>
<dbReference type="STRING" id="227377.CBU_1430"/>
<dbReference type="DNASU" id="1209336"/>
<dbReference type="EnsemblBacteria" id="AAZ22626">
    <property type="protein sequence ID" value="AAZ22626"/>
    <property type="gene ID" value="CBU_1430"/>
</dbReference>
<dbReference type="GeneID" id="1209336"/>
<dbReference type="KEGG" id="cbu:CBU_1430"/>
<dbReference type="PATRIC" id="fig|227377.7.peg.1429"/>
<dbReference type="eggNOG" id="COG0130">
    <property type="taxonomic scope" value="Bacteria"/>
</dbReference>
<dbReference type="HOGENOM" id="CLU_032087_0_3_6"/>
<dbReference type="OrthoDB" id="9802309at2"/>
<dbReference type="Proteomes" id="UP000002671">
    <property type="component" value="Chromosome"/>
</dbReference>
<dbReference type="GO" id="GO:0009982">
    <property type="term" value="F:pseudouridine synthase activity"/>
    <property type="evidence" value="ECO:0000318"/>
    <property type="project" value="GO_Central"/>
</dbReference>
<dbReference type="GO" id="GO:0003723">
    <property type="term" value="F:RNA binding"/>
    <property type="evidence" value="ECO:0007669"/>
    <property type="project" value="InterPro"/>
</dbReference>
<dbReference type="GO" id="GO:0160148">
    <property type="term" value="F:tRNA pseudouridine(55) synthase activity"/>
    <property type="evidence" value="ECO:0007669"/>
    <property type="project" value="UniProtKB-EC"/>
</dbReference>
<dbReference type="GO" id="GO:1990481">
    <property type="term" value="P:mRNA pseudouridine synthesis"/>
    <property type="evidence" value="ECO:0000318"/>
    <property type="project" value="GO_Central"/>
</dbReference>
<dbReference type="GO" id="GO:0006400">
    <property type="term" value="P:tRNA modification"/>
    <property type="evidence" value="ECO:0000318"/>
    <property type="project" value="GO_Central"/>
</dbReference>
<dbReference type="GO" id="GO:0031119">
    <property type="term" value="P:tRNA pseudouridine synthesis"/>
    <property type="evidence" value="ECO:0007669"/>
    <property type="project" value="UniProtKB-UniRule"/>
</dbReference>
<dbReference type="CDD" id="cd02573">
    <property type="entry name" value="PseudoU_synth_EcTruB"/>
    <property type="match status" value="1"/>
</dbReference>
<dbReference type="CDD" id="cd21152">
    <property type="entry name" value="PUA_TruB_bacterial"/>
    <property type="match status" value="1"/>
</dbReference>
<dbReference type="FunFam" id="2.30.130.10:FF:000012">
    <property type="entry name" value="tRNA pseudouridine synthase B"/>
    <property type="match status" value="1"/>
</dbReference>
<dbReference type="FunFam" id="3.30.2350.10:FF:000003">
    <property type="entry name" value="tRNA pseudouridine synthase B"/>
    <property type="match status" value="1"/>
</dbReference>
<dbReference type="Gene3D" id="3.30.2350.10">
    <property type="entry name" value="Pseudouridine synthase"/>
    <property type="match status" value="1"/>
</dbReference>
<dbReference type="Gene3D" id="2.30.130.10">
    <property type="entry name" value="PUA domain"/>
    <property type="match status" value="1"/>
</dbReference>
<dbReference type="HAMAP" id="MF_01080">
    <property type="entry name" value="TruB_bact"/>
    <property type="match status" value="1"/>
</dbReference>
<dbReference type="InterPro" id="IPR020103">
    <property type="entry name" value="PsdUridine_synth_cat_dom_sf"/>
</dbReference>
<dbReference type="InterPro" id="IPR002501">
    <property type="entry name" value="PsdUridine_synth_N"/>
</dbReference>
<dbReference type="InterPro" id="IPR015947">
    <property type="entry name" value="PUA-like_sf"/>
</dbReference>
<dbReference type="InterPro" id="IPR036974">
    <property type="entry name" value="PUA_sf"/>
</dbReference>
<dbReference type="InterPro" id="IPR014780">
    <property type="entry name" value="tRNA_psdUridine_synth_TruB"/>
</dbReference>
<dbReference type="InterPro" id="IPR015240">
    <property type="entry name" value="tRNA_sdUridine_synth_fam1_C"/>
</dbReference>
<dbReference type="InterPro" id="IPR032819">
    <property type="entry name" value="TruB_C"/>
</dbReference>
<dbReference type="NCBIfam" id="TIGR00431">
    <property type="entry name" value="TruB"/>
    <property type="match status" value="1"/>
</dbReference>
<dbReference type="PANTHER" id="PTHR13767:SF2">
    <property type="entry name" value="PSEUDOURIDYLATE SYNTHASE TRUB1"/>
    <property type="match status" value="1"/>
</dbReference>
<dbReference type="PANTHER" id="PTHR13767">
    <property type="entry name" value="TRNA-PSEUDOURIDINE SYNTHASE"/>
    <property type="match status" value="1"/>
</dbReference>
<dbReference type="Pfam" id="PF09157">
    <property type="entry name" value="TruB-C_2"/>
    <property type="match status" value="1"/>
</dbReference>
<dbReference type="Pfam" id="PF16198">
    <property type="entry name" value="TruB_C_2"/>
    <property type="match status" value="1"/>
</dbReference>
<dbReference type="Pfam" id="PF01509">
    <property type="entry name" value="TruB_N"/>
    <property type="match status" value="1"/>
</dbReference>
<dbReference type="SUPFAM" id="SSF55120">
    <property type="entry name" value="Pseudouridine synthase"/>
    <property type="match status" value="1"/>
</dbReference>
<dbReference type="SUPFAM" id="SSF88697">
    <property type="entry name" value="PUA domain-like"/>
    <property type="match status" value="1"/>
</dbReference>
<gene>
    <name evidence="1" type="primary">truB</name>
    <name type="ordered locus">CBU_1430</name>
</gene>
<feature type="chain" id="PRO_0000229352" description="tRNA pseudouridine synthase B">
    <location>
        <begin position="1"/>
        <end position="309"/>
    </location>
</feature>
<feature type="active site" description="Nucleophile" evidence="1">
    <location>
        <position position="51"/>
    </location>
</feature>
<proteinExistence type="inferred from homology"/>
<name>TRUB_COXBU</name>
<sequence length="309" mass="34689">MTATNHPKLFKRPVDGVLLLDKPGGMTSNEALQRVKRLFHAKKAGHTGSLDPLATGLLPICLGEATKFSQFLLEADKSYSVKGRLGVRTASGDSESPILTERPIPKLTKRALEKTLFAFRGVIDQTPSMYSALKHKGQPLYKLARQGIEVERKTRQVTIYELTLLDWDNESIELYVHCSKGTYIRTLLDDVGEALGCGAHVVALRRLRVAHYHEDQMIKLAHLEREYDKANYTGLDRYLLPLETMVSHFPAIKLSSSTAFYLQQGQAVMVPNAPTHGFVRLRDQNDQFIGIGEILSDARIAPRRLIQKR</sequence>
<comment type="function">
    <text evidence="1">Responsible for synthesis of pseudouridine from uracil-55 in the psi GC loop of transfer RNAs.</text>
</comment>
<comment type="catalytic activity">
    <reaction evidence="1">
        <text>uridine(55) in tRNA = pseudouridine(55) in tRNA</text>
        <dbReference type="Rhea" id="RHEA:42532"/>
        <dbReference type="Rhea" id="RHEA-COMP:10101"/>
        <dbReference type="Rhea" id="RHEA-COMP:10102"/>
        <dbReference type="ChEBI" id="CHEBI:65314"/>
        <dbReference type="ChEBI" id="CHEBI:65315"/>
        <dbReference type="EC" id="5.4.99.25"/>
    </reaction>
</comment>
<comment type="similarity">
    <text evidence="1">Belongs to the pseudouridine synthase TruB family. Type 1 subfamily.</text>
</comment>